<dbReference type="EC" id="7.1.1.-" evidence="1"/>
<dbReference type="EMBL" id="AM260479">
    <property type="protein sequence ID" value="CAJ92198.1"/>
    <property type="molecule type" value="Genomic_DNA"/>
</dbReference>
<dbReference type="RefSeq" id="WP_010809125.1">
    <property type="nucleotide sequence ID" value="NZ_CP039287.1"/>
</dbReference>
<dbReference type="SMR" id="Q0KCS3"/>
<dbReference type="STRING" id="381666.H16_A1057"/>
<dbReference type="KEGG" id="reh:H16_A1057"/>
<dbReference type="eggNOG" id="COG1005">
    <property type="taxonomic scope" value="Bacteria"/>
</dbReference>
<dbReference type="HOGENOM" id="CLU_015134_0_1_4"/>
<dbReference type="OrthoDB" id="9803734at2"/>
<dbReference type="Proteomes" id="UP000008210">
    <property type="component" value="Chromosome 1"/>
</dbReference>
<dbReference type="GO" id="GO:0005886">
    <property type="term" value="C:plasma membrane"/>
    <property type="evidence" value="ECO:0007669"/>
    <property type="project" value="UniProtKB-SubCell"/>
</dbReference>
<dbReference type="GO" id="GO:0003954">
    <property type="term" value="F:NADH dehydrogenase activity"/>
    <property type="evidence" value="ECO:0007669"/>
    <property type="project" value="TreeGrafter"/>
</dbReference>
<dbReference type="GO" id="GO:0016655">
    <property type="term" value="F:oxidoreductase activity, acting on NAD(P)H, quinone or similar compound as acceptor"/>
    <property type="evidence" value="ECO:0007669"/>
    <property type="project" value="UniProtKB-UniRule"/>
</dbReference>
<dbReference type="GO" id="GO:0048038">
    <property type="term" value="F:quinone binding"/>
    <property type="evidence" value="ECO:0007669"/>
    <property type="project" value="UniProtKB-KW"/>
</dbReference>
<dbReference type="GO" id="GO:0009060">
    <property type="term" value="P:aerobic respiration"/>
    <property type="evidence" value="ECO:0007669"/>
    <property type="project" value="TreeGrafter"/>
</dbReference>
<dbReference type="HAMAP" id="MF_01350">
    <property type="entry name" value="NDH1_NuoH"/>
    <property type="match status" value="1"/>
</dbReference>
<dbReference type="InterPro" id="IPR001694">
    <property type="entry name" value="NADH_UbQ_OxRdtase_su1/FPO"/>
</dbReference>
<dbReference type="InterPro" id="IPR018086">
    <property type="entry name" value="NADH_UbQ_OxRdtase_su1_CS"/>
</dbReference>
<dbReference type="NCBIfam" id="NF004741">
    <property type="entry name" value="PRK06076.1-2"/>
    <property type="match status" value="1"/>
</dbReference>
<dbReference type="NCBIfam" id="NF004742">
    <property type="entry name" value="PRK06076.1-3"/>
    <property type="match status" value="1"/>
</dbReference>
<dbReference type="NCBIfam" id="NF004745">
    <property type="entry name" value="PRK06076.1-6"/>
    <property type="match status" value="1"/>
</dbReference>
<dbReference type="PANTHER" id="PTHR11432">
    <property type="entry name" value="NADH DEHYDROGENASE SUBUNIT 1"/>
    <property type="match status" value="1"/>
</dbReference>
<dbReference type="PANTHER" id="PTHR11432:SF3">
    <property type="entry name" value="NADH-UBIQUINONE OXIDOREDUCTASE CHAIN 1"/>
    <property type="match status" value="1"/>
</dbReference>
<dbReference type="Pfam" id="PF00146">
    <property type="entry name" value="NADHdh"/>
    <property type="match status" value="1"/>
</dbReference>
<dbReference type="PROSITE" id="PS00668">
    <property type="entry name" value="COMPLEX1_ND1_2"/>
    <property type="match status" value="1"/>
</dbReference>
<comment type="function">
    <text evidence="1">NDH-1 shuttles electrons from NADH, via FMN and iron-sulfur (Fe-S) centers, to quinones in the respiratory chain. The immediate electron acceptor for the enzyme in this species is believed to be ubiquinone. Couples the redox reaction to proton translocation (for every two electrons transferred, four hydrogen ions are translocated across the cytoplasmic membrane), and thus conserves the redox energy in a proton gradient. This subunit may bind ubiquinone.</text>
</comment>
<comment type="catalytic activity">
    <reaction evidence="1">
        <text>a quinone + NADH + 5 H(+)(in) = a quinol + NAD(+) + 4 H(+)(out)</text>
        <dbReference type="Rhea" id="RHEA:57888"/>
        <dbReference type="ChEBI" id="CHEBI:15378"/>
        <dbReference type="ChEBI" id="CHEBI:24646"/>
        <dbReference type="ChEBI" id="CHEBI:57540"/>
        <dbReference type="ChEBI" id="CHEBI:57945"/>
        <dbReference type="ChEBI" id="CHEBI:132124"/>
    </reaction>
</comment>
<comment type="subunit">
    <text evidence="1">NDH-1 is composed of 14 different subunits. Subunits NuoA, H, J, K, L, M, N constitute the membrane sector of the complex.</text>
</comment>
<comment type="subcellular location">
    <subcellularLocation>
        <location evidence="1">Cell inner membrane</location>
        <topology evidence="1">Multi-pass membrane protein</topology>
    </subcellularLocation>
</comment>
<comment type="similarity">
    <text evidence="1">Belongs to the complex I subunit 1 family.</text>
</comment>
<organism>
    <name type="scientific">Cupriavidus necator (strain ATCC 17699 / DSM 428 / KCTC 22496 / NCIMB 10442 / H16 / Stanier 337)</name>
    <name type="common">Ralstonia eutropha</name>
    <dbReference type="NCBI Taxonomy" id="381666"/>
    <lineage>
        <taxon>Bacteria</taxon>
        <taxon>Pseudomonadati</taxon>
        <taxon>Pseudomonadota</taxon>
        <taxon>Betaproteobacteria</taxon>
        <taxon>Burkholderiales</taxon>
        <taxon>Burkholderiaceae</taxon>
        <taxon>Cupriavidus</taxon>
    </lineage>
</organism>
<evidence type="ECO:0000255" key="1">
    <source>
        <dbReference type="HAMAP-Rule" id="MF_01350"/>
    </source>
</evidence>
<protein>
    <recommendedName>
        <fullName evidence="1">NADH-quinone oxidoreductase subunit H</fullName>
        <ecNumber evidence="1">7.1.1.-</ecNumber>
    </recommendedName>
    <alternativeName>
        <fullName evidence="1">NADH dehydrogenase I subunit H</fullName>
    </alternativeName>
    <alternativeName>
        <fullName evidence="1">NDH-1 subunit H</fullName>
    </alternativeName>
</protein>
<name>NUOH_CUPNH</name>
<gene>
    <name evidence="1" type="primary">nuoH</name>
    <name type="ordered locus">H16_A1057</name>
</gene>
<feature type="chain" id="PRO_0000298844" description="NADH-quinone oxidoreductase subunit H">
    <location>
        <begin position="1"/>
        <end position="354"/>
    </location>
</feature>
<feature type="transmembrane region" description="Helical" evidence="1">
    <location>
        <begin position="22"/>
        <end position="42"/>
    </location>
</feature>
<feature type="transmembrane region" description="Helical" evidence="1">
    <location>
        <begin position="91"/>
        <end position="111"/>
    </location>
</feature>
<feature type="transmembrane region" description="Helical" evidence="1">
    <location>
        <begin position="124"/>
        <end position="144"/>
    </location>
</feature>
<feature type="transmembrane region" description="Helical" evidence="1">
    <location>
        <begin position="168"/>
        <end position="188"/>
    </location>
</feature>
<feature type="transmembrane region" description="Helical" evidence="1">
    <location>
        <begin position="203"/>
        <end position="223"/>
    </location>
</feature>
<feature type="transmembrane region" description="Helical" evidence="1">
    <location>
        <begin position="255"/>
        <end position="275"/>
    </location>
</feature>
<feature type="transmembrane region" description="Helical" evidence="1">
    <location>
        <begin position="291"/>
        <end position="311"/>
    </location>
</feature>
<feature type="transmembrane region" description="Helical" evidence="1">
    <location>
        <begin position="326"/>
        <end position="346"/>
    </location>
</feature>
<keyword id="KW-0997">Cell inner membrane</keyword>
<keyword id="KW-1003">Cell membrane</keyword>
<keyword id="KW-0472">Membrane</keyword>
<keyword id="KW-0520">NAD</keyword>
<keyword id="KW-0874">Quinone</keyword>
<keyword id="KW-1185">Reference proteome</keyword>
<keyword id="KW-1278">Translocase</keyword>
<keyword id="KW-0812">Transmembrane</keyword>
<keyword id="KW-1133">Transmembrane helix</keyword>
<keyword id="KW-0830">Ubiquinone</keyword>
<sequence length="354" mass="39477">MIDWITSQGQGLLGAYWTPLWILIRAVIIVVPLLLCVAYLILWERKLIGWMHVRIGPNRVGPLGLLQPIADVLKLLLKEVMMPTQVSRGMYLIAPLMVLMPAVAVWAVIPFQAEVVLADVNAGLLYVMAISSVGVYGVILAGWASNSKYAFIGAMRAAAQMVSYEIAMGFALVTVLMVAGSLNLSAIVNGQNTGYFADMGINILSWNWLPLLPMFGVYFISGVAETNRHPFDVVEGESEIVAGHMIEYSGMGFALFFLAEYINMIIISTMTALMFLGGWAPPIDSVLTNAIPGFFWLVIKVFLLLSVFIWIRASFPRYRYDQIMRLGWKVFIPLTVAWLIIVAIWIKSPWNIWH</sequence>
<reference key="1">
    <citation type="journal article" date="2006" name="Nat. Biotechnol.">
        <title>Genome sequence of the bioplastic-producing 'Knallgas' bacterium Ralstonia eutropha H16.</title>
        <authorList>
            <person name="Pohlmann A."/>
            <person name="Fricke W.F."/>
            <person name="Reinecke F."/>
            <person name="Kusian B."/>
            <person name="Liesegang H."/>
            <person name="Cramm R."/>
            <person name="Eitinger T."/>
            <person name="Ewering C."/>
            <person name="Poetter M."/>
            <person name="Schwartz E."/>
            <person name="Strittmatter A."/>
            <person name="Voss I."/>
            <person name="Gottschalk G."/>
            <person name="Steinbuechel A."/>
            <person name="Friedrich B."/>
            <person name="Bowien B."/>
        </authorList>
    </citation>
    <scope>NUCLEOTIDE SEQUENCE [LARGE SCALE GENOMIC DNA]</scope>
    <source>
        <strain>ATCC 17699 / DSM 428 / KCTC 22496 / NCIMB 10442 / H16 / Stanier 337</strain>
    </source>
</reference>
<accession>Q0KCS3</accession>
<proteinExistence type="inferred from homology"/>